<protein>
    <recommendedName>
        <fullName evidence="1">Large ribosomal subunit protein uL14</fullName>
    </recommendedName>
    <alternativeName>
        <fullName evidence="2">50S ribosomal protein L14</fullName>
    </alternativeName>
</protein>
<dbReference type="EMBL" id="CP000472">
    <property type="protein sequence ID" value="ACJ28777.1"/>
    <property type="molecule type" value="Genomic_DNA"/>
</dbReference>
<dbReference type="RefSeq" id="WP_011863976.1">
    <property type="nucleotide sequence ID" value="NC_011566.1"/>
</dbReference>
<dbReference type="SMR" id="B8CNE3"/>
<dbReference type="STRING" id="225849.swp_2021"/>
<dbReference type="KEGG" id="swp:swp_2021"/>
<dbReference type="eggNOG" id="COG0093">
    <property type="taxonomic scope" value="Bacteria"/>
</dbReference>
<dbReference type="HOGENOM" id="CLU_095071_2_1_6"/>
<dbReference type="OrthoDB" id="9806379at2"/>
<dbReference type="Proteomes" id="UP000000753">
    <property type="component" value="Chromosome"/>
</dbReference>
<dbReference type="GO" id="GO:0022625">
    <property type="term" value="C:cytosolic large ribosomal subunit"/>
    <property type="evidence" value="ECO:0007669"/>
    <property type="project" value="TreeGrafter"/>
</dbReference>
<dbReference type="GO" id="GO:0070180">
    <property type="term" value="F:large ribosomal subunit rRNA binding"/>
    <property type="evidence" value="ECO:0007669"/>
    <property type="project" value="TreeGrafter"/>
</dbReference>
<dbReference type="GO" id="GO:0003735">
    <property type="term" value="F:structural constituent of ribosome"/>
    <property type="evidence" value="ECO:0007669"/>
    <property type="project" value="InterPro"/>
</dbReference>
<dbReference type="GO" id="GO:0006412">
    <property type="term" value="P:translation"/>
    <property type="evidence" value="ECO:0007669"/>
    <property type="project" value="UniProtKB-UniRule"/>
</dbReference>
<dbReference type="CDD" id="cd00337">
    <property type="entry name" value="Ribosomal_uL14"/>
    <property type="match status" value="1"/>
</dbReference>
<dbReference type="FunFam" id="2.40.150.20:FF:000001">
    <property type="entry name" value="50S ribosomal protein L14"/>
    <property type="match status" value="1"/>
</dbReference>
<dbReference type="Gene3D" id="2.40.150.20">
    <property type="entry name" value="Ribosomal protein L14"/>
    <property type="match status" value="1"/>
</dbReference>
<dbReference type="HAMAP" id="MF_01367">
    <property type="entry name" value="Ribosomal_uL14"/>
    <property type="match status" value="1"/>
</dbReference>
<dbReference type="InterPro" id="IPR000218">
    <property type="entry name" value="Ribosomal_uL14"/>
</dbReference>
<dbReference type="InterPro" id="IPR005745">
    <property type="entry name" value="Ribosomal_uL14_bac-type"/>
</dbReference>
<dbReference type="InterPro" id="IPR019972">
    <property type="entry name" value="Ribosomal_uL14_CS"/>
</dbReference>
<dbReference type="InterPro" id="IPR036853">
    <property type="entry name" value="Ribosomal_uL14_sf"/>
</dbReference>
<dbReference type="NCBIfam" id="TIGR01067">
    <property type="entry name" value="rplN_bact"/>
    <property type="match status" value="1"/>
</dbReference>
<dbReference type="PANTHER" id="PTHR11761">
    <property type="entry name" value="50S/60S RIBOSOMAL PROTEIN L14/L23"/>
    <property type="match status" value="1"/>
</dbReference>
<dbReference type="PANTHER" id="PTHR11761:SF3">
    <property type="entry name" value="LARGE RIBOSOMAL SUBUNIT PROTEIN UL14M"/>
    <property type="match status" value="1"/>
</dbReference>
<dbReference type="Pfam" id="PF00238">
    <property type="entry name" value="Ribosomal_L14"/>
    <property type="match status" value="1"/>
</dbReference>
<dbReference type="SMART" id="SM01374">
    <property type="entry name" value="Ribosomal_L14"/>
    <property type="match status" value="1"/>
</dbReference>
<dbReference type="SUPFAM" id="SSF50193">
    <property type="entry name" value="Ribosomal protein L14"/>
    <property type="match status" value="1"/>
</dbReference>
<dbReference type="PROSITE" id="PS00049">
    <property type="entry name" value="RIBOSOMAL_L14"/>
    <property type="match status" value="1"/>
</dbReference>
<comment type="function">
    <text evidence="1">Binds to 23S rRNA. Forms part of two intersubunit bridges in the 70S ribosome.</text>
</comment>
<comment type="subunit">
    <text evidence="1">Part of the 50S ribosomal subunit. Forms a cluster with proteins L3 and L19. In the 70S ribosome, L14 and L19 interact and together make contacts with the 16S rRNA in bridges B5 and B8.</text>
</comment>
<comment type="similarity">
    <text evidence="1">Belongs to the universal ribosomal protein uL14 family.</text>
</comment>
<organism>
    <name type="scientific">Shewanella piezotolerans (strain WP3 / JCM 13877)</name>
    <dbReference type="NCBI Taxonomy" id="225849"/>
    <lineage>
        <taxon>Bacteria</taxon>
        <taxon>Pseudomonadati</taxon>
        <taxon>Pseudomonadota</taxon>
        <taxon>Gammaproteobacteria</taxon>
        <taxon>Alteromonadales</taxon>
        <taxon>Shewanellaceae</taxon>
        <taxon>Shewanella</taxon>
    </lineage>
</organism>
<reference key="1">
    <citation type="journal article" date="2008" name="PLoS ONE">
        <title>Environmental adaptation: genomic analysis of the piezotolerant and psychrotolerant deep-sea iron reducing bacterium Shewanella piezotolerans WP3.</title>
        <authorList>
            <person name="Wang F."/>
            <person name="Wang J."/>
            <person name="Jian H."/>
            <person name="Zhang B."/>
            <person name="Li S."/>
            <person name="Wang F."/>
            <person name="Zeng X."/>
            <person name="Gao L."/>
            <person name="Bartlett D.H."/>
            <person name="Yu J."/>
            <person name="Hu S."/>
            <person name="Xiao X."/>
        </authorList>
    </citation>
    <scope>NUCLEOTIDE SEQUENCE [LARGE SCALE GENOMIC DNA]</scope>
    <source>
        <strain>WP3 / JCM 13877</strain>
    </source>
</reference>
<gene>
    <name evidence="1" type="primary">rplN</name>
    <name type="ordered locus">swp_2021</name>
</gene>
<keyword id="KW-0687">Ribonucleoprotein</keyword>
<keyword id="KW-0689">Ribosomal protein</keyword>
<keyword id="KW-0694">RNA-binding</keyword>
<keyword id="KW-0699">rRNA-binding</keyword>
<proteinExistence type="inferred from homology"/>
<feature type="chain" id="PRO_1000144329" description="Large ribosomal subunit protein uL14">
    <location>
        <begin position="1"/>
        <end position="122"/>
    </location>
</feature>
<evidence type="ECO:0000255" key="1">
    <source>
        <dbReference type="HAMAP-Rule" id="MF_01367"/>
    </source>
</evidence>
<evidence type="ECO:0000305" key="2"/>
<accession>B8CNE3</accession>
<name>RL14_SHEPW</name>
<sequence>MIQMQSTLEVACNSGARRVQCIKVLGGSHRRYAGIGDVIKVSVKEAIPRGKAKKGDVYNAVVVRTKKGVRRPDGSVIRFDRNAAVLLNANLAPIGTRIFGPVTRELRTEQFMKIVSLAPEVL</sequence>